<evidence type="ECO:0000255" key="1"/>
<evidence type="ECO:0000269" key="2">
    <source>
    </source>
</evidence>
<evidence type="ECO:0000269" key="3">
    <source>
    </source>
</evidence>
<evidence type="ECO:0000305" key="4"/>
<dbReference type="EMBL" id="M31827">
    <property type="protein sequence ID" value="AAA83971.1"/>
    <property type="molecule type" value="Genomic_DNA"/>
</dbReference>
<dbReference type="EMBL" id="AL009126">
    <property type="protein sequence ID" value="CAB13398.2"/>
    <property type="molecule type" value="Genomic_DNA"/>
</dbReference>
<dbReference type="RefSeq" id="NP_389408.2">
    <property type="nucleotide sequence ID" value="NC_000964.3"/>
</dbReference>
<dbReference type="RefSeq" id="WP_003245024.1">
    <property type="nucleotide sequence ID" value="NZ_OZ025638.1"/>
</dbReference>
<dbReference type="SMR" id="C0SPA3"/>
<dbReference type="FunCoup" id="C0SPA3">
    <property type="interactions" value="5"/>
</dbReference>
<dbReference type="STRING" id="224308.BSU15250"/>
<dbReference type="PaxDb" id="224308-BSU15250"/>
<dbReference type="EnsemblBacteria" id="CAB13398">
    <property type="protein sequence ID" value="CAB13398"/>
    <property type="gene ID" value="BSU_15250"/>
</dbReference>
<dbReference type="GeneID" id="936403"/>
<dbReference type="KEGG" id="bsu:BSU15250"/>
<dbReference type="PATRIC" id="fig|224308.179.peg.1663"/>
<dbReference type="eggNOG" id="COG3879">
    <property type="taxonomic scope" value="Bacteria"/>
</dbReference>
<dbReference type="InParanoid" id="C0SPA3"/>
<dbReference type="OrthoDB" id="9776196at2"/>
<dbReference type="BioCyc" id="BSUB:BSU15250-MONOMER"/>
<dbReference type="Proteomes" id="UP000001570">
    <property type="component" value="Chromosome"/>
</dbReference>
<dbReference type="GO" id="GO:0051301">
    <property type="term" value="P:cell division"/>
    <property type="evidence" value="ECO:0007669"/>
    <property type="project" value="UniProtKB-KW"/>
</dbReference>
<dbReference type="GO" id="GO:0030435">
    <property type="term" value="P:sporulation resulting in formation of a cellular spore"/>
    <property type="evidence" value="ECO:0007669"/>
    <property type="project" value="UniProtKB-KW"/>
</dbReference>
<dbReference type="Gene3D" id="3.30.70.1880">
    <property type="entry name" value="Protein of unknown function DUF881"/>
    <property type="match status" value="1"/>
</dbReference>
<dbReference type="InterPro" id="IPR010273">
    <property type="entry name" value="DUF881"/>
</dbReference>
<dbReference type="PANTHER" id="PTHR37313">
    <property type="entry name" value="UPF0749 PROTEIN RV1825"/>
    <property type="match status" value="1"/>
</dbReference>
<dbReference type="PANTHER" id="PTHR37313:SF2">
    <property type="entry name" value="UPF0749 PROTEIN YLXX"/>
    <property type="match status" value="1"/>
</dbReference>
<dbReference type="Pfam" id="PF05949">
    <property type="entry name" value="DUF881"/>
    <property type="match status" value="1"/>
</dbReference>
<reference key="1">
    <citation type="journal article" date="1989" name="J. Bacteriol.">
        <title>Nucleotide sequence and insertional inactivation of a Bacillus subtilis gene that affects cell division, sporulation, and temperature sensitivity.</title>
        <authorList>
            <person name="Beall B."/>
            <person name="Lutkenhaus J."/>
        </authorList>
    </citation>
    <scope>NUCLEOTIDE SEQUENCE [GENOMIC DNA]</scope>
    <scope>FUNCTION</scope>
</reference>
<reference key="2">
    <citation type="journal article" date="1997" name="Nature">
        <title>The complete genome sequence of the Gram-positive bacterium Bacillus subtilis.</title>
        <authorList>
            <person name="Kunst F."/>
            <person name="Ogasawara N."/>
            <person name="Moszer I."/>
            <person name="Albertini A.M."/>
            <person name="Alloni G."/>
            <person name="Azevedo V."/>
            <person name="Bertero M.G."/>
            <person name="Bessieres P."/>
            <person name="Bolotin A."/>
            <person name="Borchert S."/>
            <person name="Borriss R."/>
            <person name="Boursier L."/>
            <person name="Brans A."/>
            <person name="Braun M."/>
            <person name="Brignell S.C."/>
            <person name="Bron S."/>
            <person name="Brouillet S."/>
            <person name="Bruschi C.V."/>
            <person name="Caldwell B."/>
            <person name="Capuano V."/>
            <person name="Carter N.M."/>
            <person name="Choi S.-K."/>
            <person name="Codani J.-J."/>
            <person name="Connerton I.F."/>
            <person name="Cummings N.J."/>
            <person name="Daniel R.A."/>
            <person name="Denizot F."/>
            <person name="Devine K.M."/>
            <person name="Duesterhoeft A."/>
            <person name="Ehrlich S.D."/>
            <person name="Emmerson P.T."/>
            <person name="Entian K.-D."/>
            <person name="Errington J."/>
            <person name="Fabret C."/>
            <person name="Ferrari E."/>
            <person name="Foulger D."/>
            <person name="Fritz C."/>
            <person name="Fujita M."/>
            <person name="Fujita Y."/>
            <person name="Fuma S."/>
            <person name="Galizzi A."/>
            <person name="Galleron N."/>
            <person name="Ghim S.-Y."/>
            <person name="Glaser P."/>
            <person name="Goffeau A."/>
            <person name="Golightly E.J."/>
            <person name="Grandi G."/>
            <person name="Guiseppi G."/>
            <person name="Guy B.J."/>
            <person name="Haga K."/>
            <person name="Haiech J."/>
            <person name="Harwood C.R."/>
            <person name="Henaut A."/>
            <person name="Hilbert H."/>
            <person name="Holsappel S."/>
            <person name="Hosono S."/>
            <person name="Hullo M.-F."/>
            <person name="Itaya M."/>
            <person name="Jones L.-M."/>
            <person name="Joris B."/>
            <person name="Karamata D."/>
            <person name="Kasahara Y."/>
            <person name="Klaerr-Blanchard M."/>
            <person name="Klein C."/>
            <person name="Kobayashi Y."/>
            <person name="Koetter P."/>
            <person name="Koningstein G."/>
            <person name="Krogh S."/>
            <person name="Kumano M."/>
            <person name="Kurita K."/>
            <person name="Lapidus A."/>
            <person name="Lardinois S."/>
            <person name="Lauber J."/>
            <person name="Lazarevic V."/>
            <person name="Lee S.-M."/>
            <person name="Levine A."/>
            <person name="Liu H."/>
            <person name="Masuda S."/>
            <person name="Mauel C."/>
            <person name="Medigue C."/>
            <person name="Medina N."/>
            <person name="Mellado R.P."/>
            <person name="Mizuno M."/>
            <person name="Moestl D."/>
            <person name="Nakai S."/>
            <person name="Noback M."/>
            <person name="Noone D."/>
            <person name="O'Reilly M."/>
            <person name="Ogawa K."/>
            <person name="Ogiwara A."/>
            <person name="Oudega B."/>
            <person name="Park S.-H."/>
            <person name="Parro V."/>
            <person name="Pohl T.M."/>
            <person name="Portetelle D."/>
            <person name="Porwollik S."/>
            <person name="Prescott A.M."/>
            <person name="Presecan E."/>
            <person name="Pujic P."/>
            <person name="Purnelle B."/>
            <person name="Rapoport G."/>
            <person name="Rey M."/>
            <person name="Reynolds S."/>
            <person name="Rieger M."/>
            <person name="Rivolta C."/>
            <person name="Rocha E."/>
            <person name="Roche B."/>
            <person name="Rose M."/>
            <person name="Sadaie Y."/>
            <person name="Sato T."/>
            <person name="Scanlan E."/>
            <person name="Schleich S."/>
            <person name="Schroeter R."/>
            <person name="Scoffone F."/>
            <person name="Sekiguchi J."/>
            <person name="Sekowska A."/>
            <person name="Seror S.J."/>
            <person name="Serror P."/>
            <person name="Shin B.-S."/>
            <person name="Soldo B."/>
            <person name="Sorokin A."/>
            <person name="Tacconi E."/>
            <person name="Takagi T."/>
            <person name="Takahashi H."/>
            <person name="Takemaru K."/>
            <person name="Takeuchi M."/>
            <person name="Tamakoshi A."/>
            <person name="Tanaka T."/>
            <person name="Terpstra P."/>
            <person name="Tognoni A."/>
            <person name="Tosato V."/>
            <person name="Uchiyama S."/>
            <person name="Vandenbol M."/>
            <person name="Vannier F."/>
            <person name="Vassarotti A."/>
            <person name="Viari A."/>
            <person name="Wambutt R."/>
            <person name="Wedler E."/>
            <person name="Wedler H."/>
            <person name="Weitzenegger T."/>
            <person name="Winters P."/>
            <person name="Wipat A."/>
            <person name="Yamamoto H."/>
            <person name="Yamane K."/>
            <person name="Yasumoto K."/>
            <person name="Yata K."/>
            <person name="Yoshida K."/>
            <person name="Yoshikawa H.-F."/>
            <person name="Zumstein E."/>
            <person name="Yoshikawa H."/>
            <person name="Danchin A."/>
        </authorList>
    </citation>
    <scope>NUCLEOTIDE SEQUENCE [LARGE SCALE GENOMIC DNA]</scope>
    <source>
        <strain>168</strain>
    </source>
</reference>
<reference key="3">
    <citation type="journal article" date="2009" name="Microbiology">
        <title>From a consortium sequence to a unified sequence: the Bacillus subtilis 168 reference genome a decade later.</title>
        <authorList>
            <person name="Barbe V."/>
            <person name="Cruveiller S."/>
            <person name="Kunst F."/>
            <person name="Lenoble P."/>
            <person name="Meurice G."/>
            <person name="Sekowska A."/>
            <person name="Vallenet D."/>
            <person name="Wang T."/>
            <person name="Moszer I."/>
            <person name="Medigue C."/>
            <person name="Danchin A."/>
        </authorList>
    </citation>
    <scope>SEQUENCE REVISION</scope>
</reference>
<reference key="4">
    <citation type="journal article" date="2002" name="Mol. Microbiol.">
        <title>Antibiotics that inhibit cell wall biosynthesis induce expression of the Bacillus subtilis sigma(W) and sigma(M) regulons.</title>
        <authorList>
            <person name="Cao M."/>
            <person name="Wang T."/>
            <person name="Ye R."/>
            <person name="Helmann J.D."/>
        </authorList>
    </citation>
    <scope>INDUCTION</scope>
</reference>
<name>YLXW_BACSU</name>
<comment type="function">
    <text evidence="3">May be involved in cell division and sporulation.</text>
</comment>
<comment type="induction">
    <text evidence="2">By vancomycin.</text>
</comment>
<comment type="similarity">
    <text evidence="4">Belongs to the UPF0749 family.</text>
</comment>
<protein>
    <recommendedName>
        <fullName>UPF0749 protein YlxW</fullName>
    </recommendedName>
</protein>
<keyword id="KW-0131">Cell cycle</keyword>
<keyword id="KW-0132">Cell division</keyword>
<keyword id="KW-0175">Coiled coil</keyword>
<keyword id="KW-1185">Reference proteome</keyword>
<keyword id="KW-0732">Signal</keyword>
<keyword id="KW-0749">Sporulation</keyword>
<proteinExistence type="evidence at transcript level"/>
<feature type="signal peptide" evidence="1">
    <location>
        <begin position="1"/>
        <end position="34"/>
    </location>
</feature>
<feature type="chain" id="PRO_0000382901" description="UPF0749 protein YlxW">
    <location>
        <begin position="35"/>
        <end position="231"/>
    </location>
</feature>
<feature type="coiled-coil region" evidence="1">
    <location>
        <begin position="44"/>
        <end position="94"/>
    </location>
</feature>
<feature type="sequence conflict" description="In Ref. 1; AAA83971." evidence="4" ref="1">
    <original>A</original>
    <variation>L</variation>
    <location>
        <position position="149"/>
    </location>
</feature>
<sequence>MRGKSAVLLSLIMLIAGFLISFSFQMTKENNKSAAETEEWKKEYALRDELLKQEKENKKFEKELYQKQNKVRQAENKLKKEKSEYYNVLEDTEKYRMYIGEVGVQGEGVEVTLEDASYIPEGENVNSYIVHESHIFQVVNELYISGAAAVAVNGQRLTHDSYIKCNGPVVTVDGVQHPAPFTVSAIGDPDVLLPSLNIAGGLIDQLSMDHISVSAEKEKNVQMKPILKTKE</sequence>
<gene>
    <name type="primary">ylxW</name>
    <name type="ordered locus">BSU15250</name>
</gene>
<organism>
    <name type="scientific">Bacillus subtilis (strain 168)</name>
    <dbReference type="NCBI Taxonomy" id="224308"/>
    <lineage>
        <taxon>Bacteria</taxon>
        <taxon>Bacillati</taxon>
        <taxon>Bacillota</taxon>
        <taxon>Bacilli</taxon>
        <taxon>Bacillales</taxon>
        <taxon>Bacillaceae</taxon>
        <taxon>Bacillus</taxon>
    </lineage>
</organism>
<accession>C0SPA3</accession>
<accession>Q45543</accession>
<accession>Q796I9</accession>